<dbReference type="EMBL" id="AE014297">
    <property type="protein sequence ID" value="AAF55863.2"/>
    <property type="molecule type" value="Genomic_DNA"/>
</dbReference>
<dbReference type="EMBL" id="BT024286">
    <property type="protein sequence ID" value="ABC86348.1"/>
    <property type="molecule type" value="mRNA"/>
</dbReference>
<dbReference type="EMBL" id="EF560170">
    <property type="protein sequence ID" value="ABQ42604.1"/>
    <property type="molecule type" value="mRNA"/>
</dbReference>
<dbReference type="EMBL" id="EF560171">
    <property type="protein sequence ID" value="ABQ42605.1"/>
    <property type="molecule type" value="mRNA"/>
</dbReference>
<dbReference type="EMBL" id="EF596938">
    <property type="protein sequence ID" value="ABQ96635.1"/>
    <property type="molecule type" value="Genomic_DNA"/>
</dbReference>
<dbReference type="RefSeq" id="NP_001262803.1">
    <property type="nucleotide sequence ID" value="NM_001275874.1"/>
</dbReference>
<dbReference type="RefSeq" id="NP_650953.1">
    <property type="nucleotide sequence ID" value="NM_142696.3"/>
</dbReference>
<dbReference type="SMR" id="Q9VDD3"/>
<dbReference type="BioGRID" id="67484">
    <property type="interactions" value="5"/>
</dbReference>
<dbReference type="FunCoup" id="Q9VDD3">
    <property type="interactions" value="1"/>
</dbReference>
<dbReference type="IntAct" id="Q9VDD3">
    <property type="interactions" value="1"/>
</dbReference>
<dbReference type="STRING" id="7227.FBpp0306056"/>
<dbReference type="TCDB" id="9.B.39.1.6">
    <property type="family name" value="the long chain fatty acid translocase (lcfat) family"/>
</dbReference>
<dbReference type="GlyCosmos" id="Q9VDD3">
    <property type="glycosylation" value="4 sites, No reported glycans"/>
</dbReference>
<dbReference type="GlyGen" id="Q9VDD3">
    <property type="glycosylation" value="4 sites"/>
</dbReference>
<dbReference type="PaxDb" id="7227-FBpp0306056"/>
<dbReference type="DNASU" id="42514"/>
<dbReference type="EnsemblMetazoa" id="FBtr0084027">
    <property type="protein sequence ID" value="FBpp0083430"/>
    <property type="gene ID" value="FBgn0260004"/>
</dbReference>
<dbReference type="EnsemblMetazoa" id="FBtr0333928">
    <property type="protein sequence ID" value="FBpp0306056"/>
    <property type="gene ID" value="FBgn0260004"/>
</dbReference>
<dbReference type="GeneID" id="42514"/>
<dbReference type="KEGG" id="dme:Dmel_CG7000"/>
<dbReference type="UCSC" id="CG7000-RA">
    <property type="organism name" value="d. melanogaster"/>
</dbReference>
<dbReference type="AGR" id="FB:FBgn0260004"/>
<dbReference type="CTD" id="42514"/>
<dbReference type="FlyBase" id="FBgn0260004">
    <property type="gene designation" value="Snmp1"/>
</dbReference>
<dbReference type="VEuPathDB" id="VectorBase:FBgn0260004"/>
<dbReference type="eggNOG" id="KOG3776">
    <property type="taxonomic scope" value="Eukaryota"/>
</dbReference>
<dbReference type="GeneTree" id="ENSGT00940000153372"/>
<dbReference type="HOGENOM" id="CLU_019853_1_2_1"/>
<dbReference type="InParanoid" id="Q9VDD3"/>
<dbReference type="OMA" id="QRKSSYH"/>
<dbReference type="OrthoDB" id="10024078at2759"/>
<dbReference type="PhylomeDB" id="Q9VDD3"/>
<dbReference type="Reactome" id="R-DME-114608">
    <property type="pathway name" value="Platelet degranulation"/>
</dbReference>
<dbReference type="Reactome" id="R-DME-1236973">
    <property type="pathway name" value="Cross-presentation of particulate exogenous antigens (phagosomes)"/>
</dbReference>
<dbReference type="Reactome" id="R-DME-434313">
    <property type="pathway name" value="Intracellular metabolism of fatty acids regulates insulin secretion"/>
</dbReference>
<dbReference type="Reactome" id="R-DME-6798695">
    <property type="pathway name" value="Neutrophil degranulation"/>
</dbReference>
<dbReference type="BioGRID-ORCS" id="42514">
    <property type="hits" value="0 hits in 3 CRISPR screens"/>
</dbReference>
<dbReference type="ChiTaRS" id="Snmp1">
    <property type="organism name" value="fly"/>
</dbReference>
<dbReference type="GenomeRNAi" id="42514"/>
<dbReference type="PRO" id="PR:Q9VDD3"/>
<dbReference type="Proteomes" id="UP000000803">
    <property type="component" value="Chromosome 3R"/>
</dbReference>
<dbReference type="Bgee" id="FBgn0260004">
    <property type="expression patterns" value="Expressed in adult tracheocyte (Drosophila) in Malpighian tubule and 92 other cell types or tissues"/>
</dbReference>
<dbReference type="ExpressionAtlas" id="Q9VDD3">
    <property type="expression patterns" value="baseline and differential"/>
</dbReference>
<dbReference type="GO" id="GO:0005929">
    <property type="term" value="C:cilium"/>
    <property type="evidence" value="ECO:0000314"/>
    <property type="project" value="FlyBase"/>
</dbReference>
<dbReference type="GO" id="GO:0030425">
    <property type="term" value="C:dendrite"/>
    <property type="evidence" value="ECO:0000314"/>
    <property type="project" value="FlyBase"/>
</dbReference>
<dbReference type="GO" id="GO:0016020">
    <property type="term" value="C:membrane"/>
    <property type="evidence" value="ECO:0000318"/>
    <property type="project" value="GO_Central"/>
</dbReference>
<dbReference type="GO" id="GO:0043025">
    <property type="term" value="C:neuronal cell body"/>
    <property type="evidence" value="ECO:0000314"/>
    <property type="project" value="FlyBase"/>
</dbReference>
<dbReference type="GO" id="GO:0005886">
    <property type="term" value="C:plasma membrane"/>
    <property type="evidence" value="ECO:0007669"/>
    <property type="project" value="UniProtKB-SubCell"/>
</dbReference>
<dbReference type="GO" id="GO:0005044">
    <property type="term" value="F:scavenger receptor activity"/>
    <property type="evidence" value="ECO:0000318"/>
    <property type="project" value="GO_Central"/>
</dbReference>
<dbReference type="GO" id="GO:0007166">
    <property type="term" value="P:cell surface receptor signaling pathway"/>
    <property type="evidence" value="ECO:0000315"/>
    <property type="project" value="FlyBase"/>
</dbReference>
<dbReference type="GO" id="GO:0071444">
    <property type="term" value="P:cellular response to pheromone"/>
    <property type="evidence" value="ECO:0000315"/>
    <property type="project" value="FlyBase"/>
</dbReference>
<dbReference type="GO" id="GO:0050911">
    <property type="term" value="P:detection of chemical stimulus involved in sensory perception of smell"/>
    <property type="evidence" value="ECO:0000315"/>
    <property type="project" value="FlyBase"/>
</dbReference>
<dbReference type="GO" id="GO:0055088">
    <property type="term" value="P:lipid homeostasis"/>
    <property type="evidence" value="ECO:0000315"/>
    <property type="project" value="FlyBase"/>
</dbReference>
<dbReference type="GO" id="GO:0035073">
    <property type="term" value="P:pupariation"/>
    <property type="evidence" value="ECO:0000315"/>
    <property type="project" value="FlyBase"/>
</dbReference>
<dbReference type="GO" id="GO:0019236">
    <property type="term" value="P:response to pheromone"/>
    <property type="evidence" value="ECO:0000315"/>
    <property type="project" value="FlyBase"/>
</dbReference>
<dbReference type="InterPro" id="IPR005428">
    <property type="entry name" value="CD36/SCARB1/SNMP1"/>
</dbReference>
<dbReference type="InterPro" id="IPR002159">
    <property type="entry name" value="CD36_fam"/>
</dbReference>
<dbReference type="PANTHER" id="PTHR11923">
    <property type="entry name" value="SCAVENGER RECEPTOR CLASS B TYPE-1 SR-B1"/>
    <property type="match status" value="1"/>
</dbReference>
<dbReference type="PANTHER" id="PTHR11923:SF69">
    <property type="entry name" value="SENSORY NEURON MEMBRANE PROTEIN 1"/>
    <property type="match status" value="1"/>
</dbReference>
<dbReference type="Pfam" id="PF01130">
    <property type="entry name" value="CD36"/>
    <property type="match status" value="1"/>
</dbReference>
<dbReference type="PRINTS" id="PR01610">
    <property type="entry name" value="CD36ANTIGEN"/>
</dbReference>
<dbReference type="PRINTS" id="PR01609">
    <property type="entry name" value="CD36FAMILY"/>
</dbReference>
<keyword id="KW-1003">Cell membrane</keyword>
<keyword id="KW-1015">Disulfide bond</keyword>
<keyword id="KW-0325">Glycoprotein</keyword>
<keyword id="KW-0472">Membrane</keyword>
<keyword id="KW-0552">Olfaction</keyword>
<keyword id="KW-0675">Receptor</keyword>
<keyword id="KW-1185">Reference proteome</keyword>
<keyword id="KW-0716">Sensory transduction</keyword>
<keyword id="KW-0812">Transmembrane</keyword>
<keyword id="KW-1133">Transmembrane helix</keyword>
<feature type="chain" id="PRO_0000408239" description="Sensory neuron membrane protein 1">
    <location>
        <begin position="1"/>
        <end position="551"/>
    </location>
</feature>
<feature type="topological domain" description="Cytoplasmic" evidence="3">
    <location>
        <begin position="1"/>
        <end position="7"/>
    </location>
</feature>
<feature type="transmembrane region" description="Helical" evidence="3">
    <location>
        <begin position="8"/>
        <end position="28"/>
    </location>
</feature>
<feature type="topological domain" description="Extracellular" evidence="3">
    <location>
        <begin position="29"/>
        <end position="459"/>
    </location>
</feature>
<feature type="transmembrane region" description="Helical" evidence="3">
    <location>
        <begin position="460"/>
        <end position="480"/>
    </location>
</feature>
<feature type="topological domain" description="Cytoplasmic" evidence="3">
    <location>
        <begin position="481"/>
        <end position="551"/>
    </location>
</feature>
<feature type="region of interest" description="Disordered" evidence="4">
    <location>
        <begin position="503"/>
        <end position="551"/>
    </location>
</feature>
<feature type="compositionally biased region" description="Polar residues" evidence="4">
    <location>
        <begin position="513"/>
        <end position="540"/>
    </location>
</feature>
<feature type="glycosylation site" description="N-linked (GlcNAc...) asparagine" evidence="3">
    <location>
        <position position="66"/>
    </location>
</feature>
<feature type="glycosylation site" description="N-linked (GlcNAc...) asparagine" evidence="3">
    <location>
        <position position="213"/>
    </location>
</feature>
<feature type="glycosylation site" description="N-linked (GlcNAc...) asparagine" evidence="3">
    <location>
        <position position="226"/>
    </location>
</feature>
<feature type="glycosylation site" description="N-linked (GlcNAc...) asparagine" evidence="3">
    <location>
        <position position="440"/>
    </location>
</feature>
<feature type="disulfide bond" evidence="2">
    <location>
        <begin position="265"/>
        <end position="330"/>
    </location>
</feature>
<feature type="disulfide bond" evidence="2">
    <location>
        <begin position="294"/>
        <end position="352"/>
    </location>
</feature>
<feature type="disulfide bond" evidence="2">
    <location>
        <begin position="332"/>
        <end position="341"/>
    </location>
</feature>
<name>SNMP1_DROME</name>
<comment type="function">
    <text evidence="5 6">Plays an olfactory role that is not restricted to pheromone sensitivity. Has a role in detection and signal transduction of the fatty-acid-derived male pheromone 11-cis vaccenyl acetate (cVA). Not required for sensitivity to general odorants. Acts in concert with Or67d and lush to capture cVA molecules on the surface of Or67d expressing olfactory dendrites and facilitate their transfer to the odorant-receptor Orco complex. Essential for the electrophysiological responses of these olfactory sensory neurons (OSNs) to cVA. Not required for the development of trichoid OSNs and support cells.</text>
</comment>
<comment type="subcellular location">
    <subcellularLocation>
        <location evidence="1">Cell membrane</location>
        <topology evidence="1">Multi-pass membrane protein</topology>
    </subcellularLocation>
</comment>
<comment type="tissue specificity">
    <text evidence="5">Selectively expressed in antenna. Expressed in lateral-distal population of OSNs that coexpress Orco, in non-neuronal support cells that surround these OSNs, in support cells elsewhere in the antenna and chemosensory organs on the proboscis. Expressed in trichoid sensory cilia (at protein level).</text>
</comment>
<comment type="developmental stage">
    <text evidence="7">In L3 instar larvae, expression increases with development. Expressed in the ring gland. Ubiquitously expressed in the testis whereas in the ovary expression appears to be restricted to one pole. Weak expression in the Garland cells, salivary glands and the central nervous system.</text>
</comment>
<comment type="disruption phenotype">
    <text evidence="5">Mutants are viable and fertile with no gross morphological or locomotor defects.</text>
</comment>
<comment type="similarity">
    <text evidence="11">Belongs to the CD36 family.</text>
</comment>
<protein>
    <recommendedName>
        <fullName evidence="8 9 10 12">Sensory neuron membrane protein 1</fullName>
        <shortName evidence="10">SNMP1Dmel</shortName>
    </recommendedName>
</protein>
<sequence length="551" mass="62117">MQVPRVKLLMGSGAMFVFAIIYGWVIFPKILKFMISKQVTLKPGSDVRELWSNTPFPLHFYIYVFNVTNPDEVSEGAKPRLQEVGPFVFDEWKDKYDLEDDVVEDTVSFTMRNTFIFNPKESLPLTGEEEIILPHPIMLPGGISVQREKAAMMELVSKGLSIVFPDAKAFLKAKFMDLFFRGINVDCSSEEFSAKALCTVFYTGEIKQAKQVNQTHFLFSFMGQANHSDSGRFTVCRGVKNNKKLGKVVKFADEPEQDIWPDGECNTFVGTDSTVFAPGLKKEDGLWAFTPDLCRSLGAYYQHKSSYHGMPSMRYTLDLGDIRADEKLHCFCEDPEDLDTCPPKGTMNLAACVGGPLMASMPHFYLGDPKLVADVDGLNPNEKDHAVYIDFELMSGTPFQAAKRLQFNLDMEPVEGIEPMKNLPKLILPMFWVEEGVQLNKTYTNLVKYTLFLGLKINSVLRWSLITFSLVGLMFSAYLFYHKSDSLDINSILKDNNKVDDVASTKEPLPSANPKQSSTVHPVQLPNTLIPGTNPATNPATHHKMEHRERY</sequence>
<evidence type="ECO:0000250" key="1">
    <source>
        <dbReference type="UniProtKB" id="O02351"/>
    </source>
</evidence>
<evidence type="ECO:0000250" key="2">
    <source>
        <dbReference type="UniProtKB" id="P26201"/>
    </source>
</evidence>
<evidence type="ECO:0000255" key="3"/>
<evidence type="ECO:0000256" key="4">
    <source>
        <dbReference type="SAM" id="MobiDB-lite"/>
    </source>
</evidence>
<evidence type="ECO:0000269" key="5">
    <source>
    </source>
</evidence>
<evidence type="ECO:0000269" key="6">
    <source>
    </source>
</evidence>
<evidence type="ECO:0000269" key="7">
    <source>
    </source>
</evidence>
<evidence type="ECO:0000303" key="8">
    <source>
    </source>
</evidence>
<evidence type="ECO:0000303" key="9">
    <source>
    </source>
</evidence>
<evidence type="ECO:0000303" key="10">
    <source>
    </source>
</evidence>
<evidence type="ECO:0000305" key="11"/>
<evidence type="ECO:0000312" key="12">
    <source>
        <dbReference type="EMBL" id="AAF55863.2"/>
    </source>
</evidence>
<evidence type="ECO:0000312" key="13">
    <source>
        <dbReference type="EMBL" id="ABC86348.1"/>
    </source>
</evidence>
<evidence type="ECO:0000312" key="14">
    <source>
        <dbReference type="EMBL" id="ABQ42604.1"/>
    </source>
</evidence>
<evidence type="ECO:0000312" key="15">
    <source>
        <dbReference type="EMBL" id="ABQ42605.1"/>
    </source>
</evidence>
<evidence type="ECO:0000312" key="16">
    <source>
        <dbReference type="EMBL" id="ABQ96635.1"/>
    </source>
</evidence>
<proteinExistence type="evidence at protein level"/>
<accession>Q9VDD3</accession>
<accession>A5JS49</accession>
<accession>A5JS50</accession>
<accession>A5YWL9</accession>
<gene>
    <name evidence="10" type="primary">Snmp1</name>
    <name type="ORF">CG7000</name>
</gene>
<reference evidence="12" key="1">
    <citation type="journal article" date="2000" name="Science">
        <title>The genome sequence of Drosophila melanogaster.</title>
        <authorList>
            <person name="Adams M.D."/>
            <person name="Celniker S.E."/>
            <person name="Holt R.A."/>
            <person name="Evans C.A."/>
            <person name="Gocayne J.D."/>
            <person name="Amanatides P.G."/>
            <person name="Scherer S.E."/>
            <person name="Li P.W."/>
            <person name="Hoskins R.A."/>
            <person name="Galle R.F."/>
            <person name="George R.A."/>
            <person name="Lewis S.E."/>
            <person name="Richards S."/>
            <person name="Ashburner M."/>
            <person name="Henderson S.N."/>
            <person name="Sutton G.G."/>
            <person name="Wortman J.R."/>
            <person name="Yandell M.D."/>
            <person name="Zhang Q."/>
            <person name="Chen L.X."/>
            <person name="Brandon R.C."/>
            <person name="Rogers Y.-H.C."/>
            <person name="Blazej R.G."/>
            <person name="Champe M."/>
            <person name="Pfeiffer B.D."/>
            <person name="Wan K.H."/>
            <person name="Doyle C."/>
            <person name="Baxter E.G."/>
            <person name="Helt G."/>
            <person name="Nelson C.R."/>
            <person name="Miklos G.L.G."/>
            <person name="Abril J.F."/>
            <person name="Agbayani A."/>
            <person name="An H.-J."/>
            <person name="Andrews-Pfannkoch C."/>
            <person name="Baldwin D."/>
            <person name="Ballew R.M."/>
            <person name="Basu A."/>
            <person name="Baxendale J."/>
            <person name="Bayraktaroglu L."/>
            <person name="Beasley E.M."/>
            <person name="Beeson K.Y."/>
            <person name="Benos P.V."/>
            <person name="Berman B.P."/>
            <person name="Bhandari D."/>
            <person name="Bolshakov S."/>
            <person name="Borkova D."/>
            <person name="Botchan M.R."/>
            <person name="Bouck J."/>
            <person name="Brokstein P."/>
            <person name="Brottier P."/>
            <person name="Burtis K.C."/>
            <person name="Busam D.A."/>
            <person name="Butler H."/>
            <person name="Cadieu E."/>
            <person name="Center A."/>
            <person name="Chandra I."/>
            <person name="Cherry J.M."/>
            <person name="Cawley S."/>
            <person name="Dahlke C."/>
            <person name="Davenport L.B."/>
            <person name="Davies P."/>
            <person name="de Pablos B."/>
            <person name="Delcher A."/>
            <person name="Deng Z."/>
            <person name="Mays A.D."/>
            <person name="Dew I."/>
            <person name="Dietz S.M."/>
            <person name="Dodson K."/>
            <person name="Doup L.E."/>
            <person name="Downes M."/>
            <person name="Dugan-Rocha S."/>
            <person name="Dunkov B.C."/>
            <person name="Dunn P."/>
            <person name="Durbin K.J."/>
            <person name="Evangelista C.C."/>
            <person name="Ferraz C."/>
            <person name="Ferriera S."/>
            <person name="Fleischmann W."/>
            <person name="Fosler C."/>
            <person name="Gabrielian A.E."/>
            <person name="Garg N.S."/>
            <person name="Gelbart W.M."/>
            <person name="Glasser K."/>
            <person name="Glodek A."/>
            <person name="Gong F."/>
            <person name="Gorrell J.H."/>
            <person name="Gu Z."/>
            <person name="Guan P."/>
            <person name="Harris M."/>
            <person name="Harris N.L."/>
            <person name="Harvey D.A."/>
            <person name="Heiman T.J."/>
            <person name="Hernandez J.R."/>
            <person name="Houck J."/>
            <person name="Hostin D."/>
            <person name="Houston K.A."/>
            <person name="Howland T.J."/>
            <person name="Wei M.-H."/>
            <person name="Ibegwam C."/>
            <person name="Jalali M."/>
            <person name="Kalush F."/>
            <person name="Karpen G.H."/>
            <person name="Ke Z."/>
            <person name="Kennison J.A."/>
            <person name="Ketchum K.A."/>
            <person name="Kimmel B.E."/>
            <person name="Kodira C.D."/>
            <person name="Kraft C.L."/>
            <person name="Kravitz S."/>
            <person name="Kulp D."/>
            <person name="Lai Z."/>
            <person name="Lasko P."/>
            <person name="Lei Y."/>
            <person name="Levitsky A.A."/>
            <person name="Li J.H."/>
            <person name="Li Z."/>
            <person name="Liang Y."/>
            <person name="Lin X."/>
            <person name="Liu X."/>
            <person name="Mattei B."/>
            <person name="McIntosh T.C."/>
            <person name="McLeod M.P."/>
            <person name="McPherson D."/>
            <person name="Merkulov G."/>
            <person name="Milshina N.V."/>
            <person name="Mobarry C."/>
            <person name="Morris J."/>
            <person name="Moshrefi A."/>
            <person name="Mount S.M."/>
            <person name="Moy M."/>
            <person name="Murphy B."/>
            <person name="Murphy L."/>
            <person name="Muzny D.M."/>
            <person name="Nelson D.L."/>
            <person name="Nelson D.R."/>
            <person name="Nelson K.A."/>
            <person name="Nixon K."/>
            <person name="Nusskern D.R."/>
            <person name="Pacleb J.M."/>
            <person name="Palazzolo M."/>
            <person name="Pittman G.S."/>
            <person name="Pan S."/>
            <person name="Pollard J."/>
            <person name="Puri V."/>
            <person name="Reese M.G."/>
            <person name="Reinert K."/>
            <person name="Remington K."/>
            <person name="Saunders R.D.C."/>
            <person name="Scheeler F."/>
            <person name="Shen H."/>
            <person name="Shue B.C."/>
            <person name="Siden-Kiamos I."/>
            <person name="Simpson M."/>
            <person name="Skupski M.P."/>
            <person name="Smith T.J."/>
            <person name="Spier E."/>
            <person name="Spradling A.C."/>
            <person name="Stapleton M."/>
            <person name="Strong R."/>
            <person name="Sun E."/>
            <person name="Svirskas R."/>
            <person name="Tector C."/>
            <person name="Turner R."/>
            <person name="Venter E."/>
            <person name="Wang A.H."/>
            <person name="Wang X."/>
            <person name="Wang Z.-Y."/>
            <person name="Wassarman D.A."/>
            <person name="Weinstock G.M."/>
            <person name="Weissenbach J."/>
            <person name="Williams S.M."/>
            <person name="Woodage T."/>
            <person name="Worley K.C."/>
            <person name="Wu D."/>
            <person name="Yang S."/>
            <person name="Yao Q.A."/>
            <person name="Ye J."/>
            <person name="Yeh R.-F."/>
            <person name="Zaveri J.S."/>
            <person name="Zhan M."/>
            <person name="Zhang G."/>
            <person name="Zhao Q."/>
            <person name="Zheng L."/>
            <person name="Zheng X.H."/>
            <person name="Zhong F.N."/>
            <person name="Zhong W."/>
            <person name="Zhou X."/>
            <person name="Zhu S.C."/>
            <person name="Zhu X."/>
            <person name="Smith H.O."/>
            <person name="Gibbs R.A."/>
            <person name="Myers E.W."/>
            <person name="Rubin G.M."/>
            <person name="Venter J.C."/>
        </authorList>
    </citation>
    <scope>NUCLEOTIDE SEQUENCE [LARGE SCALE GENOMIC DNA]</scope>
    <source>
        <strain>Berkeley</strain>
    </source>
</reference>
<reference evidence="11 12" key="2">
    <citation type="journal article" date="2002" name="Genome Biol.">
        <title>Annotation of the Drosophila melanogaster euchromatic genome: a systematic review.</title>
        <authorList>
            <person name="Misra S."/>
            <person name="Crosby M.A."/>
            <person name="Mungall C.J."/>
            <person name="Matthews B.B."/>
            <person name="Campbell K.S."/>
            <person name="Hradecky P."/>
            <person name="Huang Y."/>
            <person name="Kaminker J.S."/>
            <person name="Millburn G.H."/>
            <person name="Prochnik S.E."/>
            <person name="Smith C.D."/>
            <person name="Tupy J.L."/>
            <person name="Whitfield E.J."/>
            <person name="Bayraktaroglu L."/>
            <person name="Berman B.P."/>
            <person name="Bettencourt B.R."/>
            <person name="Celniker S.E."/>
            <person name="de Grey A.D.N.J."/>
            <person name="Drysdale R.A."/>
            <person name="Harris N.L."/>
            <person name="Richter J."/>
            <person name="Russo S."/>
            <person name="Schroeder A.J."/>
            <person name="Shu S.Q."/>
            <person name="Stapleton M."/>
            <person name="Yamada C."/>
            <person name="Ashburner M."/>
            <person name="Gelbart W.M."/>
            <person name="Rubin G.M."/>
            <person name="Lewis S.E."/>
        </authorList>
    </citation>
    <scope>GENOME REANNOTATION</scope>
    <source>
        <strain>Berkeley</strain>
    </source>
</reference>
<reference evidence="13" key="3">
    <citation type="submission" date="2006-01" db="EMBL/GenBank/DDBJ databases">
        <authorList>
            <person name="Stapleton M."/>
            <person name="Carlson J."/>
            <person name="Chavez C."/>
            <person name="Frise E."/>
            <person name="George R."/>
            <person name="Pacleb J."/>
            <person name="Park S."/>
            <person name="Wan K."/>
            <person name="Yu C."/>
            <person name="Celniker S."/>
        </authorList>
    </citation>
    <scope>NUCLEOTIDE SEQUENCE [LARGE SCALE MRNA]</scope>
    <source>
        <strain>Berkeley</strain>
    </source>
</reference>
<reference evidence="11 16" key="4">
    <citation type="journal article" date="2009" name="Insect Biochem. Mol. Biol.">
        <title>The insect SNMP gene family.</title>
        <authorList>
            <person name="Vogt R.G."/>
            <person name="Miller N.E."/>
            <person name="Litvack R."/>
            <person name="Fandino R.A."/>
            <person name="Sparks J."/>
            <person name="Staples J."/>
            <person name="Friedman R."/>
            <person name="Dickens J.C."/>
        </authorList>
    </citation>
    <scope>NUCLEOTIDE SEQUENCE [GENOMIC DNA / MRNA] OF 190-367</scope>
    <source>
        <strain evidence="16">W1118</strain>
        <tissue evidence="16">Head</tissue>
        <tissue evidence="14">Limb</tissue>
        <tissue evidence="15">Wing</tissue>
    </source>
</reference>
<reference evidence="11" key="5">
    <citation type="journal article" date="2007" name="Nature">
        <title>An essential role for a CD36-related receptor in pheromone detection in Drosophila.</title>
        <authorList>
            <person name="Benton R."/>
            <person name="Vannice K.S."/>
            <person name="Vosshall L.B."/>
        </authorList>
    </citation>
    <scope>FUNCTION</scope>
    <scope>TISSUE SPECIFICITY</scope>
    <scope>DISRUPTION PHENOTYPE</scope>
</reference>
<reference evidence="11" key="6">
    <citation type="journal article" date="2008" name="Proc. Natl. Acad. Sci. U.S.A.">
        <title>SNMP is a signaling component required for pheromone sensitivity in Drosophila.</title>
        <authorList>
            <person name="Jin X."/>
            <person name="Ha T.S."/>
            <person name="Smith D.P."/>
        </authorList>
    </citation>
    <scope>FUNCTION</scope>
</reference>
<reference key="7">
    <citation type="journal article" date="2011" name="Int. J. Dev. Biol.">
        <title>Expression of the Scavenger Receptor Class B type I (SR-BI) family in Drosophila melanogaster.</title>
        <authorList>
            <person name="Herboso L."/>
            <person name="Talamillo A."/>
            <person name="Perez C."/>
            <person name="Barrio R."/>
        </authorList>
    </citation>
    <scope>DEVELOPMENTAL STAGE</scope>
</reference>
<organism>
    <name type="scientific">Drosophila melanogaster</name>
    <name type="common">Fruit fly</name>
    <dbReference type="NCBI Taxonomy" id="7227"/>
    <lineage>
        <taxon>Eukaryota</taxon>
        <taxon>Metazoa</taxon>
        <taxon>Ecdysozoa</taxon>
        <taxon>Arthropoda</taxon>
        <taxon>Hexapoda</taxon>
        <taxon>Insecta</taxon>
        <taxon>Pterygota</taxon>
        <taxon>Neoptera</taxon>
        <taxon>Endopterygota</taxon>
        <taxon>Diptera</taxon>
        <taxon>Brachycera</taxon>
        <taxon>Muscomorpha</taxon>
        <taxon>Ephydroidea</taxon>
        <taxon>Drosophilidae</taxon>
        <taxon>Drosophila</taxon>
        <taxon>Sophophora</taxon>
    </lineage>
</organism>